<keyword id="KW-0025">Alternative splicing</keyword>
<keyword id="KW-0067">ATP-binding</keyword>
<keyword id="KW-0472">Membrane</keyword>
<keyword id="KW-0547">Nucleotide-binding</keyword>
<keyword id="KW-1185">Reference proteome</keyword>
<keyword id="KW-0812">Transmembrane</keyword>
<keyword id="KW-1133">Transmembrane helix</keyword>
<keyword id="KW-0813">Transport</keyword>
<gene>
    <name type="primary">ABCG7</name>
    <name type="synonym">WBC7</name>
    <name type="ordered locus">At2g01320</name>
    <name type="ORF">F10A8.20</name>
</gene>
<dbReference type="EMBL" id="AC006200">
    <property type="protein sequence ID" value="AAD14532.1"/>
    <property type="molecule type" value="Genomic_DNA"/>
</dbReference>
<dbReference type="EMBL" id="CP002685">
    <property type="protein sequence ID" value="AEC05433.1"/>
    <property type="molecule type" value="Genomic_DNA"/>
</dbReference>
<dbReference type="EMBL" id="CP002685">
    <property type="protein sequence ID" value="AEC05434.1"/>
    <property type="molecule type" value="Genomic_DNA"/>
</dbReference>
<dbReference type="EMBL" id="CP002685">
    <property type="protein sequence ID" value="AEC05435.1"/>
    <property type="molecule type" value="Genomic_DNA"/>
</dbReference>
<dbReference type="EMBL" id="AF367318">
    <property type="protein sequence ID" value="AAK32905.1"/>
    <property type="molecule type" value="mRNA"/>
</dbReference>
<dbReference type="EMBL" id="AY133617">
    <property type="protein sequence ID" value="AAM91447.1"/>
    <property type="molecule type" value="mRNA"/>
</dbReference>
<dbReference type="PIR" id="C84423">
    <property type="entry name" value="C84423"/>
</dbReference>
<dbReference type="RefSeq" id="NP_178241.1">
    <molecule id="Q9ZU35-1"/>
    <property type="nucleotide sequence ID" value="NM_126193.3"/>
</dbReference>
<dbReference type="RefSeq" id="NP_849922.1">
    <molecule id="Q9ZU35-2"/>
    <property type="nucleotide sequence ID" value="NM_179591.2"/>
</dbReference>
<dbReference type="RefSeq" id="NP_973392.1">
    <molecule id="Q9ZU35-1"/>
    <property type="nucleotide sequence ID" value="NM_201663.1"/>
</dbReference>
<dbReference type="SMR" id="Q9ZU35"/>
<dbReference type="BioGRID" id="64">
    <property type="interactions" value="1"/>
</dbReference>
<dbReference type="FunCoup" id="Q9ZU35">
    <property type="interactions" value="416"/>
</dbReference>
<dbReference type="STRING" id="3702.Q9ZU35"/>
<dbReference type="TCDB" id="3.A.1.204.41">
    <property type="family name" value="the atp-binding cassette (abc) superfamily"/>
</dbReference>
<dbReference type="iPTMnet" id="Q9ZU35"/>
<dbReference type="PaxDb" id="3702-AT2G01320.3"/>
<dbReference type="ProteomicsDB" id="245145">
    <molecule id="Q9ZU35-1"/>
</dbReference>
<dbReference type="EnsemblPlants" id="AT2G01320.1">
    <molecule id="Q9ZU35-1"/>
    <property type="protein sequence ID" value="AT2G01320.1"/>
    <property type="gene ID" value="AT2G01320"/>
</dbReference>
<dbReference type="EnsemblPlants" id="AT2G01320.3">
    <molecule id="Q9ZU35-2"/>
    <property type="protein sequence ID" value="AT2G01320.3"/>
    <property type="gene ID" value="AT2G01320"/>
</dbReference>
<dbReference type="EnsemblPlants" id="AT2G01320.4">
    <molecule id="Q9ZU35-1"/>
    <property type="protein sequence ID" value="AT2G01320.4"/>
    <property type="gene ID" value="AT2G01320"/>
</dbReference>
<dbReference type="GeneID" id="814660"/>
<dbReference type="Gramene" id="AT2G01320.1">
    <molecule id="Q9ZU35-1"/>
    <property type="protein sequence ID" value="AT2G01320.1"/>
    <property type="gene ID" value="AT2G01320"/>
</dbReference>
<dbReference type="Gramene" id="AT2G01320.3">
    <molecule id="Q9ZU35-2"/>
    <property type="protein sequence ID" value="AT2G01320.3"/>
    <property type="gene ID" value="AT2G01320"/>
</dbReference>
<dbReference type="Gramene" id="AT2G01320.4">
    <molecule id="Q9ZU35-1"/>
    <property type="protein sequence ID" value="AT2G01320.4"/>
    <property type="gene ID" value="AT2G01320"/>
</dbReference>
<dbReference type="KEGG" id="ath:AT2G01320"/>
<dbReference type="Araport" id="AT2G01320"/>
<dbReference type="TAIR" id="AT2G01320">
    <property type="gene designation" value="ABCG7"/>
</dbReference>
<dbReference type="eggNOG" id="KOG0061">
    <property type="taxonomic scope" value="Eukaryota"/>
</dbReference>
<dbReference type="HOGENOM" id="CLU_000604_57_9_1"/>
<dbReference type="InParanoid" id="Q9ZU35"/>
<dbReference type="PhylomeDB" id="Q9ZU35"/>
<dbReference type="PRO" id="PR:Q9ZU35"/>
<dbReference type="Proteomes" id="UP000006548">
    <property type="component" value="Chromosome 2"/>
</dbReference>
<dbReference type="ExpressionAtlas" id="Q9ZU35">
    <property type="expression patterns" value="baseline and differential"/>
</dbReference>
<dbReference type="GO" id="GO:0009507">
    <property type="term" value="C:chloroplast"/>
    <property type="evidence" value="ECO:0007005"/>
    <property type="project" value="TAIR"/>
</dbReference>
<dbReference type="GO" id="GO:0009941">
    <property type="term" value="C:chloroplast envelope"/>
    <property type="evidence" value="ECO:0007005"/>
    <property type="project" value="TAIR"/>
</dbReference>
<dbReference type="GO" id="GO:0016020">
    <property type="term" value="C:membrane"/>
    <property type="evidence" value="ECO:0007669"/>
    <property type="project" value="UniProtKB-SubCell"/>
</dbReference>
<dbReference type="GO" id="GO:0005739">
    <property type="term" value="C:mitochondrion"/>
    <property type="evidence" value="ECO:0007005"/>
    <property type="project" value="TAIR"/>
</dbReference>
<dbReference type="GO" id="GO:0140359">
    <property type="term" value="F:ABC-type transporter activity"/>
    <property type="evidence" value="ECO:0007669"/>
    <property type="project" value="InterPro"/>
</dbReference>
<dbReference type="GO" id="GO:0005524">
    <property type="term" value="F:ATP binding"/>
    <property type="evidence" value="ECO:0007669"/>
    <property type="project" value="UniProtKB-KW"/>
</dbReference>
<dbReference type="GO" id="GO:0016887">
    <property type="term" value="F:ATP hydrolysis activity"/>
    <property type="evidence" value="ECO:0007669"/>
    <property type="project" value="InterPro"/>
</dbReference>
<dbReference type="CDD" id="cd03213">
    <property type="entry name" value="ABCG_EPDR"/>
    <property type="match status" value="1"/>
</dbReference>
<dbReference type="FunFam" id="3.40.50.300:FF:000903">
    <property type="entry name" value="ABC transporter G family member 7"/>
    <property type="match status" value="1"/>
</dbReference>
<dbReference type="Gene3D" id="3.40.50.300">
    <property type="entry name" value="P-loop containing nucleotide triphosphate hydrolases"/>
    <property type="match status" value="1"/>
</dbReference>
<dbReference type="InterPro" id="IPR003593">
    <property type="entry name" value="AAA+_ATPase"/>
</dbReference>
<dbReference type="InterPro" id="IPR013525">
    <property type="entry name" value="ABC2_TM"/>
</dbReference>
<dbReference type="InterPro" id="IPR003439">
    <property type="entry name" value="ABC_transporter-like_ATP-bd"/>
</dbReference>
<dbReference type="InterPro" id="IPR017871">
    <property type="entry name" value="ABC_transporter-like_CS"/>
</dbReference>
<dbReference type="InterPro" id="IPR043926">
    <property type="entry name" value="ABCG_dom"/>
</dbReference>
<dbReference type="InterPro" id="IPR050352">
    <property type="entry name" value="ABCG_transporters"/>
</dbReference>
<dbReference type="InterPro" id="IPR027417">
    <property type="entry name" value="P-loop_NTPase"/>
</dbReference>
<dbReference type="PANTHER" id="PTHR48041:SF41">
    <property type="entry name" value="ABC TRANSPORTER G FAMILY"/>
    <property type="match status" value="1"/>
</dbReference>
<dbReference type="PANTHER" id="PTHR48041">
    <property type="entry name" value="ABC TRANSPORTER G FAMILY MEMBER 28"/>
    <property type="match status" value="1"/>
</dbReference>
<dbReference type="Pfam" id="PF01061">
    <property type="entry name" value="ABC2_membrane"/>
    <property type="match status" value="1"/>
</dbReference>
<dbReference type="Pfam" id="PF19055">
    <property type="entry name" value="ABC2_membrane_7"/>
    <property type="match status" value="1"/>
</dbReference>
<dbReference type="Pfam" id="PF00005">
    <property type="entry name" value="ABC_tran"/>
    <property type="match status" value="1"/>
</dbReference>
<dbReference type="SMART" id="SM00382">
    <property type="entry name" value="AAA"/>
    <property type="match status" value="1"/>
</dbReference>
<dbReference type="SUPFAM" id="SSF52540">
    <property type="entry name" value="P-loop containing nucleoside triphosphate hydrolases"/>
    <property type="match status" value="1"/>
</dbReference>
<dbReference type="PROSITE" id="PS00211">
    <property type="entry name" value="ABC_TRANSPORTER_1"/>
    <property type="match status" value="1"/>
</dbReference>
<dbReference type="PROSITE" id="PS50893">
    <property type="entry name" value="ABC_TRANSPORTER_2"/>
    <property type="match status" value="1"/>
</dbReference>
<name>AB7G_ARATH</name>
<proteinExistence type="evidence at transcript level"/>
<evidence type="ECO:0000250" key="1"/>
<evidence type="ECO:0000255" key="2"/>
<evidence type="ECO:0000255" key="3">
    <source>
        <dbReference type="PROSITE-ProRule" id="PRU00434"/>
    </source>
</evidence>
<evidence type="ECO:0000256" key="4">
    <source>
        <dbReference type="SAM" id="MobiDB-lite"/>
    </source>
</evidence>
<evidence type="ECO:0000305" key="5"/>
<organism>
    <name type="scientific">Arabidopsis thaliana</name>
    <name type="common">Mouse-ear cress</name>
    <dbReference type="NCBI Taxonomy" id="3702"/>
    <lineage>
        <taxon>Eukaryota</taxon>
        <taxon>Viridiplantae</taxon>
        <taxon>Streptophyta</taxon>
        <taxon>Embryophyta</taxon>
        <taxon>Tracheophyta</taxon>
        <taxon>Spermatophyta</taxon>
        <taxon>Magnoliopsida</taxon>
        <taxon>eudicotyledons</taxon>
        <taxon>Gunneridae</taxon>
        <taxon>Pentapetalae</taxon>
        <taxon>rosids</taxon>
        <taxon>malvids</taxon>
        <taxon>Brassicales</taxon>
        <taxon>Brassicaceae</taxon>
        <taxon>Camelineae</taxon>
        <taxon>Arabidopsis</taxon>
    </lineage>
</organism>
<feature type="chain" id="PRO_0000240679" description="ABC transporter G family member 7">
    <location>
        <begin position="1"/>
        <end position="725"/>
    </location>
</feature>
<feature type="transmembrane region" description="Helical" evidence="2">
    <location>
        <begin position="12"/>
        <end position="34"/>
    </location>
</feature>
<feature type="transmembrane region" description="Helical" evidence="2">
    <location>
        <begin position="446"/>
        <end position="466"/>
    </location>
</feature>
<feature type="transmembrane region" description="Helical" evidence="2">
    <location>
        <begin position="493"/>
        <end position="513"/>
    </location>
</feature>
<feature type="transmembrane region" description="Helical" evidence="2">
    <location>
        <begin position="528"/>
        <end position="548"/>
    </location>
</feature>
<feature type="transmembrane region" description="Helical" evidence="2">
    <location>
        <begin position="553"/>
        <end position="573"/>
    </location>
</feature>
<feature type="domain" description="ABC transporter" evidence="3">
    <location>
        <begin position="70"/>
        <end position="316"/>
    </location>
</feature>
<feature type="domain" description="ABC transmembrane type-2">
    <location>
        <begin position="392"/>
        <end position="603"/>
    </location>
</feature>
<feature type="region of interest" description="Disordered" evidence="4">
    <location>
        <begin position="676"/>
        <end position="725"/>
    </location>
</feature>
<feature type="compositionally biased region" description="Basic and acidic residues" evidence="4">
    <location>
        <begin position="682"/>
        <end position="691"/>
    </location>
</feature>
<feature type="binding site" evidence="3">
    <location>
        <begin position="108"/>
        <end position="115"/>
    </location>
    <ligand>
        <name>ATP</name>
        <dbReference type="ChEBI" id="CHEBI:30616"/>
    </ligand>
</feature>
<feature type="splice variant" id="VSP_019426" description="In isoform 2." evidence="5">
    <original>GL</original>
    <variation>AGSKV</variation>
    <location>
        <begin position="724"/>
        <end position="725"/>
    </location>
</feature>
<feature type="sequence conflict" description="In Ref. 3; AAK32905/AAM91447." evidence="5" ref="3">
    <original>G</original>
    <variation>R</variation>
    <location>
        <position position="672"/>
    </location>
</feature>
<sequence>MAPFGGKSLADVVSGIGGNGVGGALAAVAAALLVRLFAGPGIALLPEDEAEDDYAETEDGGGDSIRPVTIRWRNITCSLSDKSSKSVRFLLKNVSGEAKPGRLLAIMGPSGSGKTTLLNVLAGQLSLSPRLHLSGLLEVNGKPSSSKAYKLAFVRQEDLFFSQLTVRETLSFAAELQLPEISSAEERDEYVNNLLLKLGLVSCADSCVGDAKVRGISGGEKKRLSLACELIASPSVIFADEPTTGLDAFQAEKVMETLQKLAQDGHTVICSIHQPRGSVYAKFDDIVLLTEGTLVYAGPAGKEPLTYFGNFGFLCPEHVNPAEFLADLISVDYSSSETVYSSQKRVHALVDAFSQRSSSVLYATPLSMKEETKNGMRPRRKAIVERTDGWWRQFFLLLKRAWMQASRDGPTNKVRARMSVASAVIFGSVFWRMGKSQTSIQDRMGLLQVAAINTAMAALTKTVGVFPKERAIVDRERSKGSYSLGPYLLSKTIAEIPIGAAFPLMFGAVLYPMARLNPTLSRFGKFCGIVTVESFAASAMGLTVGAMVPSTEAAMAVGPSLMTVFIVFGGYYVNADNTPIIFRWIPRASLIRWAFQGLCINEFSGLKFDHQNTFDVQTGEQALERLSFGGRRIRETIAAQSRILMFWYSATYLLLEKNKPKYQKLELLVDNGETGNSGVQLDKAEVDQTEKPEDDDINQPLDDQNQTSDSDDELDEIRPFVLEGL</sequence>
<comment type="subcellular location">
    <subcellularLocation>
        <location evidence="1">Membrane</location>
        <topology evidence="1">Multi-pass membrane protein</topology>
    </subcellularLocation>
</comment>
<comment type="alternative products">
    <event type="alternative splicing"/>
    <isoform>
        <id>Q9ZU35-1</id>
        <name>1</name>
        <sequence type="displayed"/>
    </isoform>
    <isoform>
        <id>Q9ZU35-2</id>
        <name>2</name>
        <sequence type="described" ref="VSP_019426"/>
    </isoform>
</comment>
<comment type="similarity">
    <text evidence="5">Belongs to the ABC transporter superfamily. ABCG family. Eye pigment precursor importer (TC 3.A.1.204) subfamily.</text>
</comment>
<reference key="1">
    <citation type="journal article" date="1999" name="Nature">
        <title>Sequence and analysis of chromosome 2 of the plant Arabidopsis thaliana.</title>
        <authorList>
            <person name="Lin X."/>
            <person name="Kaul S."/>
            <person name="Rounsley S.D."/>
            <person name="Shea T.P."/>
            <person name="Benito M.-I."/>
            <person name="Town C.D."/>
            <person name="Fujii C.Y."/>
            <person name="Mason T.M."/>
            <person name="Bowman C.L."/>
            <person name="Barnstead M.E."/>
            <person name="Feldblyum T.V."/>
            <person name="Buell C.R."/>
            <person name="Ketchum K.A."/>
            <person name="Lee J.J."/>
            <person name="Ronning C.M."/>
            <person name="Koo H.L."/>
            <person name="Moffat K.S."/>
            <person name="Cronin L.A."/>
            <person name="Shen M."/>
            <person name="Pai G."/>
            <person name="Van Aken S."/>
            <person name="Umayam L."/>
            <person name="Tallon L.J."/>
            <person name="Gill J.E."/>
            <person name="Adams M.D."/>
            <person name="Carrera A.J."/>
            <person name="Creasy T.H."/>
            <person name="Goodman H.M."/>
            <person name="Somerville C.R."/>
            <person name="Copenhaver G.P."/>
            <person name="Preuss D."/>
            <person name="Nierman W.C."/>
            <person name="White O."/>
            <person name="Eisen J.A."/>
            <person name="Salzberg S.L."/>
            <person name="Fraser C.M."/>
            <person name="Venter J.C."/>
        </authorList>
    </citation>
    <scope>NUCLEOTIDE SEQUENCE [LARGE SCALE GENOMIC DNA]</scope>
    <source>
        <strain>cv. Columbia</strain>
    </source>
</reference>
<reference key="2">
    <citation type="journal article" date="2017" name="Plant J.">
        <title>Araport11: a complete reannotation of the Arabidopsis thaliana reference genome.</title>
        <authorList>
            <person name="Cheng C.Y."/>
            <person name="Krishnakumar V."/>
            <person name="Chan A.P."/>
            <person name="Thibaud-Nissen F."/>
            <person name="Schobel S."/>
            <person name="Town C.D."/>
        </authorList>
    </citation>
    <scope>GENOME REANNOTATION</scope>
    <source>
        <strain>cv. Columbia</strain>
    </source>
</reference>
<reference key="3">
    <citation type="journal article" date="2003" name="Science">
        <title>Empirical analysis of transcriptional activity in the Arabidopsis genome.</title>
        <authorList>
            <person name="Yamada K."/>
            <person name="Lim J."/>
            <person name="Dale J.M."/>
            <person name="Chen H."/>
            <person name="Shinn P."/>
            <person name="Palm C.J."/>
            <person name="Southwick A.M."/>
            <person name="Wu H.C."/>
            <person name="Kim C.J."/>
            <person name="Nguyen M."/>
            <person name="Pham P.K."/>
            <person name="Cheuk R.F."/>
            <person name="Karlin-Newmann G."/>
            <person name="Liu S.X."/>
            <person name="Lam B."/>
            <person name="Sakano H."/>
            <person name="Wu T."/>
            <person name="Yu G."/>
            <person name="Miranda M."/>
            <person name="Quach H.L."/>
            <person name="Tripp M."/>
            <person name="Chang C.H."/>
            <person name="Lee J.M."/>
            <person name="Toriumi M.J."/>
            <person name="Chan M.M."/>
            <person name="Tang C.C."/>
            <person name="Onodera C.S."/>
            <person name="Deng J.M."/>
            <person name="Akiyama K."/>
            <person name="Ansari Y."/>
            <person name="Arakawa T."/>
            <person name="Banh J."/>
            <person name="Banno F."/>
            <person name="Bowser L."/>
            <person name="Brooks S.Y."/>
            <person name="Carninci P."/>
            <person name="Chao Q."/>
            <person name="Choy N."/>
            <person name="Enju A."/>
            <person name="Goldsmith A.D."/>
            <person name="Gurjal M."/>
            <person name="Hansen N.F."/>
            <person name="Hayashizaki Y."/>
            <person name="Johnson-Hopson C."/>
            <person name="Hsuan V.W."/>
            <person name="Iida K."/>
            <person name="Karnes M."/>
            <person name="Khan S."/>
            <person name="Koesema E."/>
            <person name="Ishida J."/>
            <person name="Jiang P.X."/>
            <person name="Jones T."/>
            <person name="Kawai J."/>
            <person name="Kamiya A."/>
            <person name="Meyers C."/>
            <person name="Nakajima M."/>
            <person name="Narusaka M."/>
            <person name="Seki M."/>
            <person name="Sakurai T."/>
            <person name="Satou M."/>
            <person name="Tamse R."/>
            <person name="Vaysberg M."/>
            <person name="Wallender E.K."/>
            <person name="Wong C."/>
            <person name="Yamamura Y."/>
            <person name="Yuan S."/>
            <person name="Shinozaki K."/>
            <person name="Davis R.W."/>
            <person name="Theologis A."/>
            <person name="Ecker J.R."/>
        </authorList>
    </citation>
    <scope>NUCLEOTIDE SEQUENCE [LARGE SCALE MRNA] (ISOFORM 1)</scope>
    <source>
        <strain>cv. Columbia</strain>
    </source>
</reference>
<reference key="4">
    <citation type="journal article" date="2001" name="J. Biol. Chem.">
        <title>The Arabidopsis thaliana ABC protein superfamily, a complete inventory.</title>
        <authorList>
            <person name="Sanchez-Fernandez R."/>
            <person name="Davies T.G."/>
            <person name="Coleman J.O."/>
            <person name="Rea P.A."/>
        </authorList>
    </citation>
    <scope>GENE FAMILY</scope>
    <scope>NOMENCLATURE</scope>
</reference>
<reference key="5">
    <citation type="journal article" date="2008" name="Trends Plant Sci.">
        <title>Plant ABC proteins - a unified nomenclature and updated inventory.</title>
        <authorList>
            <person name="Verrier P.J."/>
            <person name="Bird D."/>
            <person name="Burla B."/>
            <person name="Dassa E."/>
            <person name="Forestier C."/>
            <person name="Geisler M."/>
            <person name="Klein M."/>
            <person name="Kolukisaoglu H.U."/>
            <person name="Lee Y."/>
            <person name="Martinoia E."/>
            <person name="Murphy A."/>
            <person name="Rea P.A."/>
            <person name="Samuels L."/>
            <person name="Schulz B."/>
            <person name="Spalding E.J."/>
            <person name="Yazaki K."/>
            <person name="Theodoulou F.L."/>
        </authorList>
    </citation>
    <scope>GENE FAMILY</scope>
    <scope>NOMENCLATURE</scope>
</reference>
<protein>
    <recommendedName>
        <fullName>ABC transporter G family member 7</fullName>
        <shortName>ABC transporter ABCG.7</shortName>
        <shortName>AtABCG7</shortName>
    </recommendedName>
    <alternativeName>
        <fullName>White-brown complex homolog protein 7</fullName>
        <shortName>AtWBC7</shortName>
    </alternativeName>
</protein>
<accession>Q9ZU35</accession>
<accession>Q3EC89</accession>
<accession>Q9ASR9</accession>